<dbReference type="EC" id="1.14.99.60" evidence="1"/>
<dbReference type="EMBL" id="AE003849">
    <property type="protein sequence ID" value="AAF84347.1"/>
    <property type="status" value="ALT_INIT"/>
    <property type="molecule type" value="Genomic_DNA"/>
</dbReference>
<dbReference type="PIR" id="G82669">
    <property type="entry name" value="G82669"/>
</dbReference>
<dbReference type="RefSeq" id="WP_010894038.1">
    <property type="nucleotide sequence ID" value="NC_002488.3"/>
</dbReference>
<dbReference type="SMR" id="Q9PD41"/>
<dbReference type="STRING" id="160492.XF_1538"/>
<dbReference type="KEGG" id="xfa:XF_1538"/>
<dbReference type="eggNOG" id="COG2941">
    <property type="taxonomic scope" value="Bacteria"/>
</dbReference>
<dbReference type="HOGENOM" id="CLU_088601_0_0_6"/>
<dbReference type="UniPathway" id="UPA00232"/>
<dbReference type="Proteomes" id="UP000000812">
    <property type="component" value="Chromosome"/>
</dbReference>
<dbReference type="GO" id="GO:0005886">
    <property type="term" value="C:plasma membrane"/>
    <property type="evidence" value="ECO:0007669"/>
    <property type="project" value="UniProtKB-SubCell"/>
</dbReference>
<dbReference type="GO" id="GO:0008682">
    <property type="term" value="F:3-demethoxyubiquinol 3-hydroxylase activity"/>
    <property type="evidence" value="ECO:0007669"/>
    <property type="project" value="UniProtKB-EC"/>
</dbReference>
<dbReference type="GO" id="GO:0046872">
    <property type="term" value="F:metal ion binding"/>
    <property type="evidence" value="ECO:0007669"/>
    <property type="project" value="UniProtKB-KW"/>
</dbReference>
<dbReference type="GO" id="GO:0006744">
    <property type="term" value="P:ubiquinone biosynthetic process"/>
    <property type="evidence" value="ECO:0007669"/>
    <property type="project" value="UniProtKB-UniRule"/>
</dbReference>
<dbReference type="CDD" id="cd01042">
    <property type="entry name" value="DMQH"/>
    <property type="match status" value="1"/>
</dbReference>
<dbReference type="Gene3D" id="1.20.1260.10">
    <property type="match status" value="1"/>
</dbReference>
<dbReference type="HAMAP" id="MF_01658">
    <property type="entry name" value="COQ7"/>
    <property type="match status" value="1"/>
</dbReference>
<dbReference type="InterPro" id="IPR047809">
    <property type="entry name" value="COQ7_proteobact"/>
</dbReference>
<dbReference type="InterPro" id="IPR012347">
    <property type="entry name" value="Ferritin-like"/>
</dbReference>
<dbReference type="InterPro" id="IPR009078">
    <property type="entry name" value="Ferritin-like_SF"/>
</dbReference>
<dbReference type="InterPro" id="IPR011566">
    <property type="entry name" value="Ubq_synth_Coq7"/>
</dbReference>
<dbReference type="NCBIfam" id="NF033656">
    <property type="entry name" value="DMQ_monoox_COQ7"/>
    <property type="match status" value="1"/>
</dbReference>
<dbReference type="PANTHER" id="PTHR11237:SF4">
    <property type="entry name" value="5-DEMETHOXYUBIQUINONE HYDROXYLASE, MITOCHONDRIAL"/>
    <property type="match status" value="1"/>
</dbReference>
<dbReference type="PANTHER" id="PTHR11237">
    <property type="entry name" value="COENZYME Q10 BIOSYNTHESIS PROTEIN 7"/>
    <property type="match status" value="1"/>
</dbReference>
<dbReference type="Pfam" id="PF03232">
    <property type="entry name" value="COQ7"/>
    <property type="match status" value="1"/>
</dbReference>
<dbReference type="SUPFAM" id="SSF47240">
    <property type="entry name" value="Ferritin-like"/>
    <property type="match status" value="1"/>
</dbReference>
<feature type="chain" id="PRO_0000338739" description="3-demethoxyubiquinol 3-hydroxylase">
    <location>
        <begin position="1"/>
        <end position="217"/>
    </location>
</feature>
<feature type="binding site" evidence="1">
    <location>
        <position position="66"/>
    </location>
    <ligand>
        <name>Fe cation</name>
        <dbReference type="ChEBI" id="CHEBI:24875"/>
        <label>1</label>
    </ligand>
</feature>
<feature type="binding site" evidence="1">
    <location>
        <position position="96"/>
    </location>
    <ligand>
        <name>Fe cation</name>
        <dbReference type="ChEBI" id="CHEBI:24875"/>
        <label>1</label>
    </ligand>
</feature>
<feature type="binding site" evidence="1">
    <location>
        <position position="96"/>
    </location>
    <ligand>
        <name>Fe cation</name>
        <dbReference type="ChEBI" id="CHEBI:24875"/>
        <label>2</label>
    </ligand>
</feature>
<feature type="binding site" evidence="1">
    <location>
        <position position="99"/>
    </location>
    <ligand>
        <name>Fe cation</name>
        <dbReference type="ChEBI" id="CHEBI:24875"/>
        <label>1</label>
    </ligand>
</feature>
<feature type="binding site" evidence="1">
    <location>
        <position position="148"/>
    </location>
    <ligand>
        <name>Fe cation</name>
        <dbReference type="ChEBI" id="CHEBI:24875"/>
        <label>2</label>
    </ligand>
</feature>
<feature type="binding site" evidence="1">
    <location>
        <position position="180"/>
    </location>
    <ligand>
        <name>Fe cation</name>
        <dbReference type="ChEBI" id="CHEBI:24875"/>
        <label>1</label>
    </ligand>
</feature>
<feature type="binding site" evidence="1">
    <location>
        <position position="180"/>
    </location>
    <ligand>
        <name>Fe cation</name>
        <dbReference type="ChEBI" id="CHEBI:24875"/>
        <label>2</label>
    </ligand>
</feature>
<feature type="binding site" evidence="1">
    <location>
        <position position="183"/>
    </location>
    <ligand>
        <name>Fe cation</name>
        <dbReference type="ChEBI" id="CHEBI:24875"/>
        <label>2</label>
    </ligand>
</feature>
<keyword id="KW-1003">Cell membrane</keyword>
<keyword id="KW-0408">Iron</keyword>
<keyword id="KW-0472">Membrane</keyword>
<keyword id="KW-0479">Metal-binding</keyword>
<keyword id="KW-0503">Monooxygenase</keyword>
<keyword id="KW-0560">Oxidoreductase</keyword>
<keyword id="KW-0831">Ubiquinone biosynthesis</keyword>
<evidence type="ECO:0000255" key="1">
    <source>
        <dbReference type="HAMAP-Rule" id="MF_01658"/>
    </source>
</evidence>
<evidence type="ECO:0000305" key="2"/>
<protein>
    <recommendedName>
        <fullName evidence="1">3-demethoxyubiquinol 3-hydroxylase</fullName>
        <shortName evidence="1">DMQ hydroxylase</shortName>
        <ecNumber evidence="1">1.14.99.60</ecNumber>
    </recommendedName>
    <alternativeName>
        <fullName evidence="1">2-nonaprenyl-3-methyl-6-methoxy-1,4-benzoquinol hydroxylase</fullName>
    </alternativeName>
</protein>
<name>COQ7_XYLFA</name>
<comment type="function">
    <text evidence="1">Catalyzes the hydroxylation of 2-nonaprenyl-3-methyl-6-methoxy-1,4-benzoquinol during ubiquinone biosynthesis.</text>
</comment>
<comment type="catalytic activity">
    <reaction evidence="1">
        <text>a 5-methoxy-2-methyl-3-(all-trans-polyprenyl)benzene-1,4-diol + AH2 + O2 = a 3-demethylubiquinol + A + H2O</text>
        <dbReference type="Rhea" id="RHEA:50908"/>
        <dbReference type="Rhea" id="RHEA-COMP:10859"/>
        <dbReference type="Rhea" id="RHEA-COMP:10914"/>
        <dbReference type="ChEBI" id="CHEBI:13193"/>
        <dbReference type="ChEBI" id="CHEBI:15377"/>
        <dbReference type="ChEBI" id="CHEBI:15379"/>
        <dbReference type="ChEBI" id="CHEBI:17499"/>
        <dbReference type="ChEBI" id="CHEBI:84167"/>
        <dbReference type="ChEBI" id="CHEBI:84422"/>
        <dbReference type="EC" id="1.14.99.60"/>
    </reaction>
</comment>
<comment type="cofactor">
    <cofactor evidence="1">
        <name>Fe cation</name>
        <dbReference type="ChEBI" id="CHEBI:24875"/>
    </cofactor>
    <text evidence="1">Binds 2 iron ions per subunit.</text>
</comment>
<comment type="pathway">
    <text evidence="1">Cofactor biosynthesis; ubiquinone biosynthesis.</text>
</comment>
<comment type="subcellular location">
    <subcellularLocation>
        <location evidence="1">Cell membrane</location>
        <topology evidence="1">Peripheral membrane protein</topology>
    </subcellularLocation>
</comment>
<comment type="similarity">
    <text evidence="1">Belongs to the COQ7 family.</text>
</comment>
<comment type="sequence caution" evidence="2">
    <conflict type="erroneous initiation">
        <sequence resource="EMBL-CDS" id="AAF84347"/>
    </conflict>
</comment>
<gene>
    <name evidence="1" type="primary">coq7</name>
    <name type="ordered locus">XF_1538</name>
</gene>
<sequence>MDVILSTRHHSHLDSLLIETQRVLEVVFGHPVAQRPSPANAFPNPLLSPKDRRHAAGLMRINHVGEICAQGLYFGQVAVARKEELRRHLLKAAQEETDHLSWCSDRLHELESRPSLFNPLWYSSSYMLGVFAGLLGDPWSLGFVVETERQVEAHLEKHLQVLPESDARSREILRVMKVEEARHADQADHAGARLLPSPIPGAMAWAARLMKVVAYRI</sequence>
<reference key="1">
    <citation type="journal article" date="2000" name="Nature">
        <title>The genome sequence of the plant pathogen Xylella fastidiosa.</title>
        <authorList>
            <person name="Simpson A.J.G."/>
            <person name="Reinach F.C."/>
            <person name="Arruda P."/>
            <person name="Abreu F.A."/>
            <person name="Acencio M."/>
            <person name="Alvarenga R."/>
            <person name="Alves L.M.C."/>
            <person name="Araya J.E."/>
            <person name="Baia G.S."/>
            <person name="Baptista C.S."/>
            <person name="Barros M.H."/>
            <person name="Bonaccorsi E.D."/>
            <person name="Bordin S."/>
            <person name="Bove J.M."/>
            <person name="Briones M.R.S."/>
            <person name="Bueno M.R.P."/>
            <person name="Camargo A.A."/>
            <person name="Camargo L.E.A."/>
            <person name="Carraro D.M."/>
            <person name="Carrer H."/>
            <person name="Colauto N.B."/>
            <person name="Colombo C."/>
            <person name="Costa F.F."/>
            <person name="Costa M.C.R."/>
            <person name="Costa-Neto C.M."/>
            <person name="Coutinho L.L."/>
            <person name="Cristofani M."/>
            <person name="Dias-Neto E."/>
            <person name="Docena C."/>
            <person name="El-Dorry H."/>
            <person name="Facincani A.P."/>
            <person name="Ferreira A.J.S."/>
            <person name="Ferreira V.C.A."/>
            <person name="Ferro J.A."/>
            <person name="Fraga J.S."/>
            <person name="Franca S.C."/>
            <person name="Franco M.C."/>
            <person name="Frohme M."/>
            <person name="Furlan L.R."/>
            <person name="Garnier M."/>
            <person name="Goldman G.H."/>
            <person name="Goldman M.H.S."/>
            <person name="Gomes S.L."/>
            <person name="Gruber A."/>
            <person name="Ho P.L."/>
            <person name="Hoheisel J.D."/>
            <person name="Junqueira M.L."/>
            <person name="Kemper E.L."/>
            <person name="Kitajima J.P."/>
            <person name="Krieger J.E."/>
            <person name="Kuramae E.E."/>
            <person name="Laigret F."/>
            <person name="Lambais M.R."/>
            <person name="Leite L.C.C."/>
            <person name="Lemos E.G.M."/>
            <person name="Lemos M.V.F."/>
            <person name="Lopes S.A."/>
            <person name="Lopes C.R."/>
            <person name="Machado J.A."/>
            <person name="Machado M.A."/>
            <person name="Madeira A.M.B.N."/>
            <person name="Madeira H.M.F."/>
            <person name="Marino C.L."/>
            <person name="Marques M.V."/>
            <person name="Martins E.A.L."/>
            <person name="Martins E.M.F."/>
            <person name="Matsukuma A.Y."/>
            <person name="Menck C.F.M."/>
            <person name="Miracca E.C."/>
            <person name="Miyaki C.Y."/>
            <person name="Monteiro-Vitorello C.B."/>
            <person name="Moon D.H."/>
            <person name="Nagai M.A."/>
            <person name="Nascimento A.L.T.O."/>
            <person name="Netto L.E.S."/>
            <person name="Nhani A. Jr."/>
            <person name="Nobrega F.G."/>
            <person name="Nunes L.R."/>
            <person name="Oliveira M.A."/>
            <person name="de Oliveira M.C."/>
            <person name="de Oliveira R.C."/>
            <person name="Palmieri D.A."/>
            <person name="Paris A."/>
            <person name="Peixoto B.R."/>
            <person name="Pereira G.A.G."/>
            <person name="Pereira H.A. Jr."/>
            <person name="Pesquero J.B."/>
            <person name="Quaggio R.B."/>
            <person name="Roberto P.G."/>
            <person name="Rodrigues V."/>
            <person name="de Rosa A.J.M."/>
            <person name="de Rosa V.E. Jr."/>
            <person name="de Sa R.G."/>
            <person name="Santelli R.V."/>
            <person name="Sawasaki H.E."/>
            <person name="da Silva A.C.R."/>
            <person name="da Silva A.M."/>
            <person name="da Silva F.R."/>
            <person name="Silva W.A. Jr."/>
            <person name="da Silveira J.F."/>
            <person name="Silvestri M.L.Z."/>
            <person name="Siqueira W.J."/>
            <person name="de Souza A.A."/>
            <person name="de Souza A.P."/>
            <person name="Terenzi M.F."/>
            <person name="Truffi D."/>
            <person name="Tsai S.M."/>
            <person name="Tsuhako M.H."/>
            <person name="Vallada H."/>
            <person name="Van Sluys M.A."/>
            <person name="Verjovski-Almeida S."/>
            <person name="Vettore A.L."/>
            <person name="Zago M.A."/>
            <person name="Zatz M."/>
            <person name="Meidanis J."/>
            <person name="Setubal J.C."/>
        </authorList>
    </citation>
    <scope>NUCLEOTIDE SEQUENCE [LARGE SCALE GENOMIC DNA]</scope>
    <source>
        <strain>9a5c</strain>
    </source>
</reference>
<proteinExistence type="inferred from homology"/>
<organism>
    <name type="scientific">Xylella fastidiosa (strain 9a5c)</name>
    <dbReference type="NCBI Taxonomy" id="160492"/>
    <lineage>
        <taxon>Bacteria</taxon>
        <taxon>Pseudomonadati</taxon>
        <taxon>Pseudomonadota</taxon>
        <taxon>Gammaproteobacteria</taxon>
        <taxon>Lysobacterales</taxon>
        <taxon>Lysobacteraceae</taxon>
        <taxon>Xylella</taxon>
    </lineage>
</organism>
<accession>Q9PD41</accession>